<gene>
    <name evidence="3" type="primary">phm7</name>
</gene>
<sequence length="386" mass="41434">MSEPTSSSSLDITSNCIIETPLQPSDFLPKSANLFPKFPERISVDSWELWEFDTFDTNGSVAFGCSLYRDARGVEQGGFHAEVNALWPDGTHWGETLYFAVSEVVENSDGTTGGKWLSKDGGSITFHIASDYTAAALDFNVPGKVSGTMELRNHANVSPTSNLPASDAEAQLCPGVYYTFPMGPVATSVTATFSSVGANGESRELFISSGYGGMVRGWSARPWPTFMNDAYYVVAQVGPYMLQILRTLGSVFVQHKPFAVARLYLDGSLVSAANTVVGDELTAHADDVKGDAVRLTKVQPDEKSQGLSGKFRDGNVGYVLEFAKKDSEHGWTFQISHKRAVWSEPTSAPGPDGTGKSGWIEAISGGAKGENYEGHGFGGQLQIPVP</sequence>
<organism>
    <name type="scientific">Pyrenochaetopsis sp</name>
    <dbReference type="NCBI Taxonomy" id="1756125"/>
    <lineage>
        <taxon>Eukaryota</taxon>
        <taxon>Fungi</taxon>
        <taxon>Dikarya</taxon>
        <taxon>Ascomycota</taxon>
        <taxon>Pezizomycotina</taxon>
        <taxon>Dothideomycetes</taxon>
        <taxon>Pleosporomycetidae</taxon>
        <taxon>Pleosporales</taxon>
        <taxon>Pleosporineae</taxon>
        <taxon>Pyrenochaetopsidaceae</taxon>
        <taxon>Pyrenochaetopsis</taxon>
    </lineage>
</organism>
<evidence type="ECO:0000269" key="1">
    <source>
    </source>
</evidence>
<evidence type="ECO:0000269" key="2">
    <source>
    </source>
</evidence>
<evidence type="ECO:0000303" key="3">
    <source>
    </source>
</evidence>
<evidence type="ECO:0000305" key="4"/>
<evidence type="ECO:0000305" key="5">
    <source>
    </source>
</evidence>
<evidence type="ECO:0007829" key="6">
    <source>
        <dbReference type="PDB" id="7E5U"/>
    </source>
</evidence>
<evidence type="ECO:0007829" key="7">
    <source>
        <dbReference type="PDB" id="7E5V"/>
    </source>
</evidence>
<proteinExistence type="evidence at protein level"/>
<name>PHM7_PYRSX</name>
<accession>A0A2Z5XAU0</accession>
<reference key="1">
    <citation type="journal article" date="2018" name="Angew. Chem. Int. Ed.">
        <title>Control of the stereochemical course of [4+2] cycloaddition during trans-decalin formation by Fsa2-family enzymes.</title>
        <authorList>
            <person name="Kato N."/>
            <person name="Nogawa T."/>
            <person name="Takita R."/>
            <person name="Kinugasa K."/>
            <person name="Kanai M."/>
            <person name="Uchiyama M."/>
            <person name="Osada H."/>
            <person name="Takahashi S."/>
        </authorList>
    </citation>
    <scope>NUCLEOTIDE SEQUENCE [GENOMIC DNA]</scope>
    <scope>FUNCTION</scope>
    <scope>CATALYTIC ACTIVITY</scope>
    <scope>DISRUPTION PHENOTYPE</scope>
    <scope>PATHWAY</scope>
    <source>
        <strain>RK10-F058</strain>
    </source>
</reference>
<reference key="2">
    <citation type="journal article" date="2021" name="Angew. Chem. Int. Ed.">
        <title>Molecular basis for two stereoselective Diels-Alderases that produce decalin skeletons*.</title>
        <authorList>
            <person name="Fujiyama K."/>
            <person name="Kato N."/>
            <person name="Re S."/>
            <person name="Kinugasa K."/>
            <person name="Watanabe K."/>
            <person name="Takita R."/>
            <person name="Nogawa T."/>
            <person name="Hino T."/>
            <person name="Osada H."/>
            <person name="Sugita Y."/>
            <person name="Takahashi S."/>
            <person name="Nagano S."/>
        </authorList>
    </citation>
    <scope>X-RAY CRYSTALLOGRAPHY (1.61 ANGSTROMS) IN COMPLEX WITH INHIBITOR</scope>
    <scope>DOMAIN</scope>
    <scope>FUNCTION</scope>
    <scope>CATALYTIC ACTIVITY</scope>
    <scope>ACTIVITY REGULATION</scope>
    <scope>MUTAGENESIS OF LEU-49; GLU-51; ASP-53; SER-66; TYR-68; GLU-82; ASN-84; TYR-178; TRP-223; LEU-245; THR-247; TRP-342; LYS-356 AND LEU-381</scope>
</reference>
<feature type="chain" id="PRO_0000453342" description="Diels-Alderase phm7">
    <location>
        <begin position="1"/>
        <end position="386"/>
    </location>
</feature>
<feature type="region of interest" description="Beta-sandwich motif" evidence="5">
    <location>
        <begin position="1"/>
        <end position="223"/>
    </location>
</feature>
<feature type="region of interest" description="Beta-barrel motif" evidence="5">
    <location>
        <begin position="223"/>
        <end position="386"/>
    </location>
</feature>
<feature type="binding site" evidence="2">
    <location>
        <position position="51"/>
    </location>
    <ligand>
        <name>substrate</name>
    </ligand>
</feature>
<feature type="binding site" evidence="2">
    <location>
        <position position="84"/>
    </location>
    <ligand>
        <name>substrate</name>
    </ligand>
</feature>
<feature type="binding site" evidence="2">
    <location>
        <position position="356"/>
    </location>
    <ligand>
        <name>substrate</name>
    </ligand>
</feature>
<feature type="mutagenesis site" description="Significantly decreases enzyme activity." evidence="2">
    <original>L</original>
    <variation>A</variation>
    <location>
        <position position="49"/>
    </location>
</feature>
<feature type="mutagenesis site" description="Significantly decreases enzyme activity." evidence="2">
    <original>E</original>
    <variation>A</variation>
    <location>
        <position position="51"/>
    </location>
</feature>
<feature type="mutagenesis site" description="Significantly decreases enzyme activity." evidence="2">
    <original>D</original>
    <variation>A</variation>
    <location>
        <position position="53"/>
    </location>
</feature>
<feature type="mutagenesis site" description="Significantly decreases enzyme activity." evidence="2">
    <original>S</original>
    <variation>A</variation>
    <location>
        <position position="66"/>
    </location>
</feature>
<feature type="mutagenesis site" description="Significantly decreases enzyme activity." evidence="2">
    <original>Y</original>
    <variation>A</variation>
    <location>
        <position position="68"/>
    </location>
</feature>
<feature type="mutagenesis site" description="Significantly decreases enzyme activity." evidence="2">
    <original>E</original>
    <variation>A</variation>
    <location>
        <position position="82"/>
    </location>
</feature>
<feature type="mutagenesis site" description="Significantly decreases enzyme activity." evidence="2">
    <original>N</original>
    <variation>A</variation>
    <location>
        <position position="84"/>
    </location>
</feature>
<feature type="mutagenesis site" description="Significantly decreases enzyme activity." evidence="2">
    <original>Y</original>
    <variation>A</variation>
    <location>
        <position position="178"/>
    </location>
</feature>
<feature type="mutagenesis site" description="Significantly decreases enzyme activity." evidence="2">
    <original>W</original>
    <variation>A</variation>
    <location>
        <position position="223"/>
    </location>
</feature>
<feature type="mutagenesis site" description="Significantly decreases enzyme activity." evidence="2">
    <original>L</original>
    <variation>A</variation>
    <location>
        <position position="245"/>
    </location>
</feature>
<feature type="mutagenesis site" description="Significantly decreases enzyme activity." evidence="2">
    <original>T</original>
    <variation>A</variation>
    <location>
        <position position="247"/>
    </location>
</feature>
<feature type="mutagenesis site" description="Significantly decreases enzyme activity." evidence="2">
    <original>W</original>
    <variation>A</variation>
    <location>
        <position position="342"/>
    </location>
</feature>
<feature type="mutagenesis site" description="Significantly decreases enzyme activity." evidence="2">
    <original>K</original>
    <variation>A</variation>
    <location>
        <position position="356"/>
    </location>
</feature>
<feature type="mutagenesis site" description="Significantly decreases enzyme activity." evidence="2">
    <original>L</original>
    <variation>A</variation>
    <location>
        <position position="381"/>
    </location>
</feature>
<feature type="strand" evidence="7">
    <location>
        <begin position="6"/>
        <end position="15"/>
    </location>
</feature>
<feature type="strand" evidence="7">
    <location>
        <begin position="17"/>
        <end position="20"/>
    </location>
</feature>
<feature type="strand" evidence="6">
    <location>
        <begin position="42"/>
        <end position="45"/>
    </location>
</feature>
<feature type="strand" evidence="7">
    <location>
        <begin position="47"/>
        <end position="55"/>
    </location>
</feature>
<feature type="strand" evidence="7">
    <location>
        <begin position="62"/>
        <end position="71"/>
    </location>
</feature>
<feature type="helix" evidence="7">
    <location>
        <begin position="74"/>
        <end position="76"/>
    </location>
</feature>
<feature type="strand" evidence="7">
    <location>
        <begin position="78"/>
        <end position="86"/>
    </location>
</feature>
<feature type="strand" evidence="7">
    <location>
        <begin position="92"/>
        <end position="106"/>
    </location>
</feature>
<feature type="strand" evidence="7">
    <location>
        <begin position="112"/>
        <end position="117"/>
    </location>
</feature>
<feature type="strand" evidence="7">
    <location>
        <begin position="123"/>
        <end position="128"/>
    </location>
</feature>
<feature type="strand" evidence="7">
    <location>
        <begin position="132"/>
        <end position="141"/>
    </location>
</feature>
<feature type="turn" evidence="7">
    <location>
        <begin position="142"/>
        <end position="144"/>
    </location>
</feature>
<feature type="strand" evidence="7">
    <location>
        <begin position="145"/>
        <end position="152"/>
    </location>
</feature>
<feature type="helix" evidence="7">
    <location>
        <begin position="159"/>
        <end position="162"/>
    </location>
</feature>
<feature type="helix" evidence="7">
    <location>
        <begin position="167"/>
        <end position="170"/>
    </location>
</feature>
<feature type="strand" evidence="7">
    <location>
        <begin position="171"/>
        <end position="173"/>
    </location>
</feature>
<feature type="strand" evidence="7">
    <location>
        <begin position="176"/>
        <end position="179"/>
    </location>
</feature>
<feature type="strand" evidence="7">
    <location>
        <begin position="186"/>
        <end position="196"/>
    </location>
</feature>
<feature type="turn" evidence="7">
    <location>
        <begin position="197"/>
        <end position="200"/>
    </location>
</feature>
<feature type="strand" evidence="7">
    <location>
        <begin position="201"/>
        <end position="221"/>
    </location>
</feature>
<feature type="helix" evidence="7">
    <location>
        <begin position="223"/>
        <end position="225"/>
    </location>
</feature>
<feature type="strand" evidence="7">
    <location>
        <begin position="228"/>
        <end position="237"/>
    </location>
</feature>
<feature type="strand" evidence="7">
    <location>
        <begin position="240"/>
        <end position="248"/>
    </location>
</feature>
<feature type="helix" evidence="7">
    <location>
        <begin position="251"/>
        <end position="253"/>
    </location>
</feature>
<feature type="strand" evidence="7">
    <location>
        <begin position="258"/>
        <end position="265"/>
    </location>
</feature>
<feature type="strand" evidence="7">
    <location>
        <begin position="268"/>
        <end position="276"/>
    </location>
</feature>
<feature type="strand" evidence="7">
    <location>
        <begin position="291"/>
        <end position="298"/>
    </location>
</feature>
<feature type="turn" evidence="7">
    <location>
        <begin position="300"/>
        <end position="302"/>
    </location>
</feature>
<feature type="strand" evidence="7">
    <location>
        <begin position="310"/>
        <end position="312"/>
    </location>
</feature>
<feature type="strand" evidence="7">
    <location>
        <begin position="317"/>
        <end position="323"/>
    </location>
</feature>
<feature type="strand" evidence="7">
    <location>
        <begin position="331"/>
        <end position="347"/>
    </location>
</feature>
<feature type="strand" evidence="7">
    <location>
        <begin position="355"/>
        <end position="367"/>
    </location>
</feature>
<feature type="strand" evidence="7">
    <location>
        <begin position="372"/>
        <end position="382"/>
    </location>
</feature>
<protein>
    <recommendedName>
        <fullName evidence="3">Diels-Alderase phm7</fullName>
        <ecNumber evidence="1 2">5.5.1.-</ecNumber>
    </recommendedName>
    <alternativeName>
        <fullName evidence="3">Phomasetin biosynthesis cluster protein 7</fullName>
    </alternativeName>
</protein>
<keyword id="KW-0002">3D-structure</keyword>
<keyword id="KW-0413">Isomerase</keyword>
<comment type="function">
    <text evidence="1 2">Diels-Alderase; part of the gene cluster that mediates the biosynthesis of the trans-fused decalin-containing tetramic acid phomasetin, the stereochemical opposite of the HIV-1 integrase inhibitor equisetin (PubMed:29972614). The PKS module of phm1 together with the enoylreductase phm4 catalyze the formation of the polyketide unit which is then conjugated to L-serine by the condensation domain of the phm1 NRPS module (PubMed:29972614). Activity of the Dieckmann cyclase domain (RED) of phm1 results in release of the Dieckmann product intermediate (PubMed:29972614). The Diels-Alderase phm7 then uses the Dieckmann product of phm1 as substrate and catalyzes the Diels-Alder cycloaddition to form the decalin ring of N-desmethylphomasetin (PubMed:29972614, PubMed:34121297). N-desmethylphomasetin is further methylated to phomasetin by the methyltransferase phm5 (PubMed:29972614).</text>
</comment>
<comment type="activity regulation">
    <text evidence="2">3-aminomethyl-p-menthane which is similar to the phomasetin substructure, dose-dependently inhibits phm7 activity in vitro and production of phomasetin in the fungus.</text>
</comment>
<comment type="pathway">
    <text evidence="1">Secondary metabolite biosynthesis.</text>
</comment>
<comment type="disruption phenotype">
    <text evidence="1">Leads to a significant decrease in the production of phomasetin.</text>
</comment>
<comment type="similarity">
    <text evidence="4">Belongs to the Diels-Alderase family.</text>
</comment>
<dbReference type="EC" id="5.5.1.-" evidence="1 2"/>
<dbReference type="EMBL" id="LC361337">
    <property type="protein sequence ID" value="BBC43190.1"/>
    <property type="molecule type" value="Genomic_DNA"/>
</dbReference>
<dbReference type="PDB" id="7DMO">
    <property type="method" value="X-ray"/>
    <property type="resolution" value="2.00 A"/>
    <property type="chains" value="A/B/C/D/E/F=1-386"/>
</dbReference>
<dbReference type="PDB" id="7E5U">
    <property type="method" value="X-ray"/>
    <property type="resolution" value="1.62 A"/>
    <property type="chains" value="A/B/C=1-386"/>
</dbReference>
<dbReference type="PDB" id="7E5V">
    <property type="method" value="X-ray"/>
    <property type="resolution" value="1.61 A"/>
    <property type="chains" value="A/B/C=1-386"/>
</dbReference>
<dbReference type="PDBsum" id="7DMO"/>
<dbReference type="PDBsum" id="7E5U"/>
<dbReference type="PDBsum" id="7E5V"/>
<dbReference type="SMR" id="A0A2Z5XAU0"/>
<dbReference type="GO" id="GO:0016853">
    <property type="term" value="F:isomerase activity"/>
    <property type="evidence" value="ECO:0007669"/>
    <property type="project" value="UniProtKB-KW"/>
</dbReference>
<dbReference type="InterPro" id="IPR054499">
    <property type="entry name" value="DA_C"/>
</dbReference>
<dbReference type="Pfam" id="PF22903">
    <property type="entry name" value="DA_C"/>
    <property type="match status" value="1"/>
</dbReference>
<dbReference type="Pfam" id="PF24137">
    <property type="entry name" value="DA_N"/>
    <property type="match status" value="1"/>
</dbReference>